<sequence>MNTLAMDAEQLFLSKTIFEEEVFHEGFSLIAGIDEVGRGPLAGPVVAGACILPRGKVFAGVNDSKKLTPKERGKIRDILVNDSEVYYGLGVVSVERIDEINILEATKEAMAAAIANLPIHPDFLLVDGLHLPHKIPCKKIIKGDSKSASIAAASILAKEYRDDLMRELHQLYPDYGFDKHKGYGTAAHLAALKAFGPCDCHRKSFAPVRQVF</sequence>
<accession>Q5L5M0</accession>
<name>RNH2_CHLAB</name>
<feature type="chain" id="PRO_0000111557" description="Ribonuclease HII">
    <location>
        <begin position="1"/>
        <end position="212"/>
    </location>
</feature>
<feature type="domain" description="RNase H type-2" evidence="2">
    <location>
        <begin position="28"/>
        <end position="212"/>
    </location>
</feature>
<feature type="binding site" evidence="1">
    <location>
        <position position="34"/>
    </location>
    <ligand>
        <name>a divalent metal cation</name>
        <dbReference type="ChEBI" id="CHEBI:60240"/>
    </ligand>
</feature>
<feature type="binding site" evidence="1">
    <location>
        <position position="35"/>
    </location>
    <ligand>
        <name>a divalent metal cation</name>
        <dbReference type="ChEBI" id="CHEBI:60240"/>
    </ligand>
</feature>
<feature type="binding site" evidence="1">
    <location>
        <position position="127"/>
    </location>
    <ligand>
        <name>a divalent metal cation</name>
        <dbReference type="ChEBI" id="CHEBI:60240"/>
    </ligand>
</feature>
<proteinExistence type="inferred from homology"/>
<protein>
    <recommendedName>
        <fullName evidence="1">Ribonuclease HII</fullName>
        <shortName evidence="1">RNase HII</shortName>
        <ecNumber evidence="1">3.1.26.4</ecNumber>
    </recommendedName>
</protein>
<comment type="function">
    <text evidence="1">Endonuclease that specifically degrades the RNA of RNA-DNA hybrids.</text>
</comment>
<comment type="catalytic activity">
    <reaction evidence="1">
        <text>Endonucleolytic cleavage to 5'-phosphomonoester.</text>
        <dbReference type="EC" id="3.1.26.4"/>
    </reaction>
</comment>
<comment type="cofactor">
    <cofactor evidence="1">
        <name>Mn(2+)</name>
        <dbReference type="ChEBI" id="CHEBI:29035"/>
    </cofactor>
    <cofactor evidence="1">
        <name>Mg(2+)</name>
        <dbReference type="ChEBI" id="CHEBI:18420"/>
    </cofactor>
    <text evidence="1">Manganese or magnesium. Binds 1 divalent metal ion per monomer in the absence of substrate. May bind a second metal ion after substrate binding.</text>
</comment>
<comment type="subcellular location">
    <subcellularLocation>
        <location evidence="1">Cytoplasm</location>
    </subcellularLocation>
</comment>
<comment type="similarity">
    <text evidence="1">Belongs to the RNase HII family.</text>
</comment>
<dbReference type="EC" id="3.1.26.4" evidence="1"/>
<dbReference type="EMBL" id="CR848038">
    <property type="protein sequence ID" value="CAH64071.1"/>
    <property type="molecule type" value="Genomic_DNA"/>
</dbReference>
<dbReference type="RefSeq" id="WP_011097213.1">
    <property type="nucleotide sequence ID" value="NC_004552.2"/>
</dbReference>
<dbReference type="SMR" id="Q5L5M0"/>
<dbReference type="KEGG" id="cab:CAB625"/>
<dbReference type="eggNOG" id="COG0164">
    <property type="taxonomic scope" value="Bacteria"/>
</dbReference>
<dbReference type="HOGENOM" id="CLU_036532_3_2_0"/>
<dbReference type="OrthoDB" id="9803420at2"/>
<dbReference type="Proteomes" id="UP000001012">
    <property type="component" value="Chromosome"/>
</dbReference>
<dbReference type="GO" id="GO:0005737">
    <property type="term" value="C:cytoplasm"/>
    <property type="evidence" value="ECO:0007669"/>
    <property type="project" value="UniProtKB-SubCell"/>
</dbReference>
<dbReference type="GO" id="GO:0032299">
    <property type="term" value="C:ribonuclease H2 complex"/>
    <property type="evidence" value="ECO:0007669"/>
    <property type="project" value="TreeGrafter"/>
</dbReference>
<dbReference type="GO" id="GO:0030145">
    <property type="term" value="F:manganese ion binding"/>
    <property type="evidence" value="ECO:0007669"/>
    <property type="project" value="UniProtKB-UniRule"/>
</dbReference>
<dbReference type="GO" id="GO:0003723">
    <property type="term" value="F:RNA binding"/>
    <property type="evidence" value="ECO:0007669"/>
    <property type="project" value="InterPro"/>
</dbReference>
<dbReference type="GO" id="GO:0004523">
    <property type="term" value="F:RNA-DNA hybrid ribonuclease activity"/>
    <property type="evidence" value="ECO:0007669"/>
    <property type="project" value="UniProtKB-UniRule"/>
</dbReference>
<dbReference type="GO" id="GO:0043137">
    <property type="term" value="P:DNA replication, removal of RNA primer"/>
    <property type="evidence" value="ECO:0007669"/>
    <property type="project" value="TreeGrafter"/>
</dbReference>
<dbReference type="GO" id="GO:0006298">
    <property type="term" value="P:mismatch repair"/>
    <property type="evidence" value="ECO:0007669"/>
    <property type="project" value="TreeGrafter"/>
</dbReference>
<dbReference type="CDD" id="cd07182">
    <property type="entry name" value="RNase_HII_bacteria_HII_like"/>
    <property type="match status" value="1"/>
</dbReference>
<dbReference type="FunFam" id="3.30.420.10:FF:000006">
    <property type="entry name" value="Ribonuclease HII"/>
    <property type="match status" value="1"/>
</dbReference>
<dbReference type="Gene3D" id="3.30.420.10">
    <property type="entry name" value="Ribonuclease H-like superfamily/Ribonuclease H"/>
    <property type="match status" value="1"/>
</dbReference>
<dbReference type="HAMAP" id="MF_00052_B">
    <property type="entry name" value="RNase_HII_B"/>
    <property type="match status" value="1"/>
</dbReference>
<dbReference type="InterPro" id="IPR022898">
    <property type="entry name" value="RNase_HII"/>
</dbReference>
<dbReference type="InterPro" id="IPR001352">
    <property type="entry name" value="RNase_HII/HIII"/>
</dbReference>
<dbReference type="InterPro" id="IPR024567">
    <property type="entry name" value="RNase_HII/HIII_dom"/>
</dbReference>
<dbReference type="InterPro" id="IPR012337">
    <property type="entry name" value="RNaseH-like_sf"/>
</dbReference>
<dbReference type="InterPro" id="IPR036397">
    <property type="entry name" value="RNaseH_sf"/>
</dbReference>
<dbReference type="NCBIfam" id="NF000594">
    <property type="entry name" value="PRK00015.1-1"/>
    <property type="match status" value="1"/>
</dbReference>
<dbReference type="NCBIfam" id="NF000595">
    <property type="entry name" value="PRK00015.1-3"/>
    <property type="match status" value="1"/>
</dbReference>
<dbReference type="PANTHER" id="PTHR10954">
    <property type="entry name" value="RIBONUCLEASE H2 SUBUNIT A"/>
    <property type="match status" value="1"/>
</dbReference>
<dbReference type="PANTHER" id="PTHR10954:SF18">
    <property type="entry name" value="RIBONUCLEASE HII"/>
    <property type="match status" value="1"/>
</dbReference>
<dbReference type="Pfam" id="PF01351">
    <property type="entry name" value="RNase_HII"/>
    <property type="match status" value="1"/>
</dbReference>
<dbReference type="SUPFAM" id="SSF53098">
    <property type="entry name" value="Ribonuclease H-like"/>
    <property type="match status" value="1"/>
</dbReference>
<dbReference type="PROSITE" id="PS51975">
    <property type="entry name" value="RNASE_H_2"/>
    <property type="match status" value="1"/>
</dbReference>
<reference key="1">
    <citation type="journal article" date="2005" name="Genome Res.">
        <title>The Chlamydophila abortus genome sequence reveals an array of variable proteins that contribute to interspecies variation.</title>
        <authorList>
            <person name="Thomson N.R."/>
            <person name="Yeats C."/>
            <person name="Bell K."/>
            <person name="Holden M.T.G."/>
            <person name="Bentley S.D."/>
            <person name="Livingstone M."/>
            <person name="Cerdeno-Tarraga A.-M."/>
            <person name="Harris B."/>
            <person name="Doggett J."/>
            <person name="Ormond D."/>
            <person name="Mungall K."/>
            <person name="Clarke K."/>
            <person name="Feltwell T."/>
            <person name="Hance Z."/>
            <person name="Sanders M."/>
            <person name="Quail M.A."/>
            <person name="Price C."/>
            <person name="Barrell B.G."/>
            <person name="Parkhill J."/>
            <person name="Longbottom D."/>
        </authorList>
    </citation>
    <scope>NUCLEOTIDE SEQUENCE [LARGE SCALE GENOMIC DNA]</scope>
    <source>
        <strain>DSM 27085 / S26/3</strain>
    </source>
</reference>
<gene>
    <name evidence="1" type="primary">rnhB</name>
    <name type="ordered locus">CAB625</name>
</gene>
<organism>
    <name type="scientific">Chlamydia abortus (strain DSM 27085 / S26/3)</name>
    <name type="common">Chlamydophila abortus</name>
    <dbReference type="NCBI Taxonomy" id="218497"/>
    <lineage>
        <taxon>Bacteria</taxon>
        <taxon>Pseudomonadati</taxon>
        <taxon>Chlamydiota</taxon>
        <taxon>Chlamydiia</taxon>
        <taxon>Chlamydiales</taxon>
        <taxon>Chlamydiaceae</taxon>
        <taxon>Chlamydia/Chlamydophila group</taxon>
        <taxon>Chlamydia</taxon>
    </lineage>
</organism>
<keyword id="KW-0963">Cytoplasm</keyword>
<keyword id="KW-0255">Endonuclease</keyword>
<keyword id="KW-0378">Hydrolase</keyword>
<keyword id="KW-0464">Manganese</keyword>
<keyword id="KW-0479">Metal-binding</keyword>
<keyword id="KW-0540">Nuclease</keyword>
<evidence type="ECO:0000255" key="1">
    <source>
        <dbReference type="HAMAP-Rule" id="MF_00052"/>
    </source>
</evidence>
<evidence type="ECO:0000255" key="2">
    <source>
        <dbReference type="PROSITE-ProRule" id="PRU01319"/>
    </source>
</evidence>